<keyword id="KW-0414">Isoprene biosynthesis</keyword>
<keyword id="KW-0464">Manganese</keyword>
<keyword id="KW-0479">Metal-binding</keyword>
<keyword id="KW-0521">NADP</keyword>
<keyword id="KW-0560">Oxidoreductase</keyword>
<evidence type="ECO:0000255" key="1">
    <source>
        <dbReference type="HAMAP-Rule" id="MF_00183"/>
    </source>
</evidence>
<sequence length="396" mass="40931">MAGSSLRQVAVFGATGSIGASALDVIARHPERLRASLLSAGSKVDELLALCATHRPAHAVIADAALYPALRDGLRALGLATQAHAGAEALDALASGDVCDTVVAAIVGAAGLPSTLAAARAGKRLLLANKESLVLAGELLTRTAAAAGAEIIPIDSEHSAIFQCLRSCDASRGVRRVILTASGGPFRGRDRAALAAVTPAQAVAHPKWSMGPKISVDSATMMNKGLEVIEAHHLFGLPGEQIDVLVHPQSLVHSLVEFVDGSTLAQLGLPDMRTTLAVGLAWPERVDSGVGGLDLLRQGRLDFEAPDTAAFPCLRLAWDALRAGGTAPAILNAANEVAVSAFLQGQVGFLAIPALVEHTLTTLPRHNADSLDTLLFADAQARQITERALAHHALHA</sequence>
<proteinExistence type="inferred from homology"/>
<feature type="chain" id="PRO_1000020323" description="1-deoxy-D-xylulose 5-phosphate reductoisomerase">
    <location>
        <begin position="1"/>
        <end position="396"/>
    </location>
</feature>
<feature type="binding site" evidence="1">
    <location>
        <position position="15"/>
    </location>
    <ligand>
        <name>NADPH</name>
        <dbReference type="ChEBI" id="CHEBI:57783"/>
    </ligand>
</feature>
<feature type="binding site" evidence="1">
    <location>
        <position position="16"/>
    </location>
    <ligand>
        <name>NADPH</name>
        <dbReference type="ChEBI" id="CHEBI:57783"/>
    </ligand>
</feature>
<feature type="binding site" evidence="1">
    <location>
        <position position="17"/>
    </location>
    <ligand>
        <name>NADPH</name>
        <dbReference type="ChEBI" id="CHEBI:57783"/>
    </ligand>
</feature>
<feature type="binding site" evidence="1">
    <location>
        <position position="18"/>
    </location>
    <ligand>
        <name>NADPH</name>
        <dbReference type="ChEBI" id="CHEBI:57783"/>
    </ligand>
</feature>
<feature type="binding site" evidence="1">
    <location>
        <position position="41"/>
    </location>
    <ligand>
        <name>NADPH</name>
        <dbReference type="ChEBI" id="CHEBI:57783"/>
    </ligand>
</feature>
<feature type="binding site" evidence="1">
    <location>
        <position position="129"/>
    </location>
    <ligand>
        <name>NADPH</name>
        <dbReference type="ChEBI" id="CHEBI:57783"/>
    </ligand>
</feature>
<feature type="binding site" evidence="1">
    <location>
        <position position="130"/>
    </location>
    <ligand>
        <name>1-deoxy-D-xylulose 5-phosphate</name>
        <dbReference type="ChEBI" id="CHEBI:57792"/>
    </ligand>
</feature>
<feature type="binding site" evidence="1">
    <location>
        <position position="131"/>
    </location>
    <ligand>
        <name>NADPH</name>
        <dbReference type="ChEBI" id="CHEBI:57783"/>
    </ligand>
</feature>
<feature type="binding site" evidence="1">
    <location>
        <position position="155"/>
    </location>
    <ligand>
        <name>Mn(2+)</name>
        <dbReference type="ChEBI" id="CHEBI:29035"/>
    </ligand>
</feature>
<feature type="binding site" evidence="1">
    <location>
        <position position="156"/>
    </location>
    <ligand>
        <name>1-deoxy-D-xylulose 5-phosphate</name>
        <dbReference type="ChEBI" id="CHEBI:57792"/>
    </ligand>
</feature>
<feature type="binding site" evidence="1">
    <location>
        <position position="157"/>
    </location>
    <ligand>
        <name>1-deoxy-D-xylulose 5-phosphate</name>
        <dbReference type="ChEBI" id="CHEBI:57792"/>
    </ligand>
</feature>
<feature type="binding site" evidence="1">
    <location>
        <position position="157"/>
    </location>
    <ligand>
        <name>Mn(2+)</name>
        <dbReference type="ChEBI" id="CHEBI:29035"/>
    </ligand>
</feature>
<feature type="binding site" evidence="1">
    <location>
        <position position="182"/>
    </location>
    <ligand>
        <name>1-deoxy-D-xylulose 5-phosphate</name>
        <dbReference type="ChEBI" id="CHEBI:57792"/>
    </ligand>
</feature>
<feature type="binding site" evidence="1">
    <location>
        <position position="205"/>
    </location>
    <ligand>
        <name>1-deoxy-D-xylulose 5-phosphate</name>
        <dbReference type="ChEBI" id="CHEBI:57792"/>
    </ligand>
</feature>
<feature type="binding site" evidence="1">
    <location>
        <position position="211"/>
    </location>
    <ligand>
        <name>NADPH</name>
        <dbReference type="ChEBI" id="CHEBI:57783"/>
    </ligand>
</feature>
<feature type="binding site" evidence="1">
    <location>
        <position position="218"/>
    </location>
    <ligand>
        <name>1-deoxy-D-xylulose 5-phosphate</name>
        <dbReference type="ChEBI" id="CHEBI:57792"/>
    </ligand>
</feature>
<feature type="binding site" evidence="1">
    <location>
        <position position="223"/>
    </location>
    <ligand>
        <name>1-deoxy-D-xylulose 5-phosphate</name>
        <dbReference type="ChEBI" id="CHEBI:57792"/>
    </ligand>
</feature>
<feature type="binding site" evidence="1">
    <location>
        <position position="224"/>
    </location>
    <ligand>
        <name>1-deoxy-D-xylulose 5-phosphate</name>
        <dbReference type="ChEBI" id="CHEBI:57792"/>
    </ligand>
</feature>
<feature type="binding site" evidence="1">
    <location>
        <position position="227"/>
    </location>
    <ligand>
        <name>1-deoxy-D-xylulose 5-phosphate</name>
        <dbReference type="ChEBI" id="CHEBI:57792"/>
    </ligand>
</feature>
<feature type="binding site" evidence="1">
    <location>
        <position position="227"/>
    </location>
    <ligand>
        <name>Mn(2+)</name>
        <dbReference type="ChEBI" id="CHEBI:29035"/>
    </ligand>
</feature>
<organism>
    <name type="scientific">Xanthomonas euvesicatoria pv. vesicatoria (strain 85-10)</name>
    <name type="common">Xanthomonas campestris pv. vesicatoria</name>
    <dbReference type="NCBI Taxonomy" id="316273"/>
    <lineage>
        <taxon>Bacteria</taxon>
        <taxon>Pseudomonadati</taxon>
        <taxon>Pseudomonadota</taxon>
        <taxon>Gammaproteobacteria</taxon>
        <taxon>Lysobacterales</taxon>
        <taxon>Lysobacteraceae</taxon>
        <taxon>Xanthomonas</taxon>
    </lineage>
</organism>
<protein>
    <recommendedName>
        <fullName evidence="1">1-deoxy-D-xylulose 5-phosphate reductoisomerase</fullName>
        <shortName evidence="1">DXP reductoisomerase</shortName>
        <ecNumber evidence="1">1.1.1.267</ecNumber>
    </recommendedName>
    <alternativeName>
        <fullName evidence="1">1-deoxyxylulose-5-phosphate reductoisomerase</fullName>
    </alternativeName>
    <alternativeName>
        <fullName evidence="1">2-C-methyl-D-erythritol 4-phosphate synthase</fullName>
    </alternativeName>
</protein>
<accession>Q3BVL0</accession>
<gene>
    <name evidence="1" type="primary">dxr</name>
    <name type="ordered locus">XCV1472</name>
</gene>
<reference key="1">
    <citation type="journal article" date="2005" name="J. Bacteriol.">
        <title>Insights into genome plasticity and pathogenicity of the plant pathogenic Bacterium Xanthomonas campestris pv. vesicatoria revealed by the complete genome sequence.</title>
        <authorList>
            <person name="Thieme F."/>
            <person name="Koebnik R."/>
            <person name="Bekel T."/>
            <person name="Berger C."/>
            <person name="Boch J."/>
            <person name="Buettner D."/>
            <person name="Caldana C."/>
            <person name="Gaigalat L."/>
            <person name="Goesmann A."/>
            <person name="Kay S."/>
            <person name="Kirchner O."/>
            <person name="Lanz C."/>
            <person name="Linke B."/>
            <person name="McHardy A.C."/>
            <person name="Meyer F."/>
            <person name="Mittenhuber G."/>
            <person name="Nies D.H."/>
            <person name="Niesbach-Kloesgen U."/>
            <person name="Patschkowski T."/>
            <person name="Rueckert C."/>
            <person name="Rupp O."/>
            <person name="Schneiker S."/>
            <person name="Schuster S.C."/>
            <person name="Vorhoelter F.J."/>
            <person name="Weber E."/>
            <person name="Puehler A."/>
            <person name="Bonas U."/>
            <person name="Bartels D."/>
            <person name="Kaiser O."/>
        </authorList>
    </citation>
    <scope>NUCLEOTIDE SEQUENCE [LARGE SCALE GENOMIC DNA]</scope>
    <source>
        <strain>85-10</strain>
    </source>
</reference>
<name>DXR_XANE5</name>
<comment type="function">
    <text evidence="1">Catalyzes the NADPH-dependent rearrangement and reduction of 1-deoxy-D-xylulose-5-phosphate (DXP) to 2-C-methyl-D-erythritol 4-phosphate (MEP).</text>
</comment>
<comment type="catalytic activity">
    <reaction evidence="1">
        <text>2-C-methyl-D-erythritol 4-phosphate + NADP(+) = 1-deoxy-D-xylulose 5-phosphate + NADPH + H(+)</text>
        <dbReference type="Rhea" id="RHEA:13717"/>
        <dbReference type="ChEBI" id="CHEBI:15378"/>
        <dbReference type="ChEBI" id="CHEBI:57783"/>
        <dbReference type="ChEBI" id="CHEBI:57792"/>
        <dbReference type="ChEBI" id="CHEBI:58262"/>
        <dbReference type="ChEBI" id="CHEBI:58349"/>
        <dbReference type="EC" id="1.1.1.267"/>
    </reaction>
    <physiologicalReaction direction="right-to-left" evidence="1">
        <dbReference type="Rhea" id="RHEA:13719"/>
    </physiologicalReaction>
</comment>
<comment type="cofactor">
    <cofactor evidence="1">
        <name>Mg(2+)</name>
        <dbReference type="ChEBI" id="CHEBI:18420"/>
    </cofactor>
    <cofactor evidence="1">
        <name>Mn(2+)</name>
        <dbReference type="ChEBI" id="CHEBI:29035"/>
    </cofactor>
</comment>
<comment type="pathway">
    <text evidence="1">Isoprenoid biosynthesis; isopentenyl diphosphate biosynthesis via DXP pathway; isopentenyl diphosphate from 1-deoxy-D-xylulose 5-phosphate: step 1/6.</text>
</comment>
<comment type="similarity">
    <text evidence="1">Belongs to the DXR family.</text>
</comment>
<dbReference type="EC" id="1.1.1.267" evidence="1"/>
<dbReference type="EMBL" id="AM039952">
    <property type="protein sequence ID" value="CAJ23103.1"/>
    <property type="molecule type" value="Genomic_DNA"/>
</dbReference>
<dbReference type="RefSeq" id="WP_011346892.1">
    <property type="nucleotide sequence ID" value="NZ_CP017190.1"/>
</dbReference>
<dbReference type="SMR" id="Q3BVL0"/>
<dbReference type="STRING" id="456327.BJD11_15285"/>
<dbReference type="KEGG" id="xcv:XCV1472"/>
<dbReference type="eggNOG" id="COG0743">
    <property type="taxonomic scope" value="Bacteria"/>
</dbReference>
<dbReference type="HOGENOM" id="CLU_035714_4_0_6"/>
<dbReference type="UniPathway" id="UPA00056">
    <property type="reaction ID" value="UER00092"/>
</dbReference>
<dbReference type="Proteomes" id="UP000007069">
    <property type="component" value="Chromosome"/>
</dbReference>
<dbReference type="GO" id="GO:0030604">
    <property type="term" value="F:1-deoxy-D-xylulose-5-phosphate reductoisomerase activity"/>
    <property type="evidence" value="ECO:0007669"/>
    <property type="project" value="UniProtKB-UniRule"/>
</dbReference>
<dbReference type="GO" id="GO:0030145">
    <property type="term" value="F:manganese ion binding"/>
    <property type="evidence" value="ECO:0007669"/>
    <property type="project" value="TreeGrafter"/>
</dbReference>
<dbReference type="GO" id="GO:0070402">
    <property type="term" value="F:NADPH binding"/>
    <property type="evidence" value="ECO:0007669"/>
    <property type="project" value="InterPro"/>
</dbReference>
<dbReference type="GO" id="GO:0051484">
    <property type="term" value="P:isopentenyl diphosphate biosynthetic process, methylerythritol 4-phosphate pathway involved in terpenoid biosynthetic process"/>
    <property type="evidence" value="ECO:0007669"/>
    <property type="project" value="TreeGrafter"/>
</dbReference>
<dbReference type="FunFam" id="3.40.50.720:FF:000045">
    <property type="entry name" value="1-deoxy-D-xylulose 5-phosphate reductoisomerase"/>
    <property type="match status" value="1"/>
</dbReference>
<dbReference type="Gene3D" id="1.10.1740.10">
    <property type="match status" value="1"/>
</dbReference>
<dbReference type="Gene3D" id="3.40.50.720">
    <property type="entry name" value="NAD(P)-binding Rossmann-like Domain"/>
    <property type="match status" value="1"/>
</dbReference>
<dbReference type="HAMAP" id="MF_00183">
    <property type="entry name" value="DXP_reductoisom"/>
    <property type="match status" value="1"/>
</dbReference>
<dbReference type="InterPro" id="IPR003821">
    <property type="entry name" value="DXP_reductoisomerase"/>
</dbReference>
<dbReference type="InterPro" id="IPR013644">
    <property type="entry name" value="DXP_reductoisomerase_C"/>
</dbReference>
<dbReference type="InterPro" id="IPR013512">
    <property type="entry name" value="DXP_reductoisomerase_N"/>
</dbReference>
<dbReference type="InterPro" id="IPR026877">
    <property type="entry name" value="DXPR_C"/>
</dbReference>
<dbReference type="InterPro" id="IPR036169">
    <property type="entry name" value="DXPR_C_sf"/>
</dbReference>
<dbReference type="InterPro" id="IPR036291">
    <property type="entry name" value="NAD(P)-bd_dom_sf"/>
</dbReference>
<dbReference type="NCBIfam" id="TIGR00243">
    <property type="entry name" value="Dxr"/>
    <property type="match status" value="1"/>
</dbReference>
<dbReference type="NCBIfam" id="NF009114">
    <property type="entry name" value="PRK12464.1"/>
    <property type="match status" value="1"/>
</dbReference>
<dbReference type="PANTHER" id="PTHR30525">
    <property type="entry name" value="1-DEOXY-D-XYLULOSE 5-PHOSPHATE REDUCTOISOMERASE"/>
    <property type="match status" value="1"/>
</dbReference>
<dbReference type="PANTHER" id="PTHR30525:SF0">
    <property type="entry name" value="1-DEOXY-D-XYLULOSE 5-PHOSPHATE REDUCTOISOMERASE, CHLOROPLASTIC"/>
    <property type="match status" value="1"/>
</dbReference>
<dbReference type="Pfam" id="PF08436">
    <property type="entry name" value="DXP_redisom_C"/>
    <property type="match status" value="1"/>
</dbReference>
<dbReference type="Pfam" id="PF02670">
    <property type="entry name" value="DXP_reductoisom"/>
    <property type="match status" value="1"/>
</dbReference>
<dbReference type="Pfam" id="PF13288">
    <property type="entry name" value="DXPR_C"/>
    <property type="match status" value="1"/>
</dbReference>
<dbReference type="PIRSF" id="PIRSF006205">
    <property type="entry name" value="Dxp_reductismrs"/>
    <property type="match status" value="1"/>
</dbReference>
<dbReference type="SUPFAM" id="SSF69055">
    <property type="entry name" value="1-deoxy-D-xylulose-5-phosphate reductoisomerase, C-terminal domain"/>
    <property type="match status" value="1"/>
</dbReference>
<dbReference type="SUPFAM" id="SSF55347">
    <property type="entry name" value="Glyceraldehyde-3-phosphate dehydrogenase-like, C-terminal domain"/>
    <property type="match status" value="1"/>
</dbReference>
<dbReference type="SUPFAM" id="SSF51735">
    <property type="entry name" value="NAD(P)-binding Rossmann-fold domains"/>
    <property type="match status" value="1"/>
</dbReference>